<keyword id="KW-0378">Hydrolase</keyword>
<keyword id="KW-0441">Lipid A biosynthesis</keyword>
<keyword id="KW-0444">Lipid biosynthesis</keyword>
<keyword id="KW-0443">Lipid metabolism</keyword>
<keyword id="KW-0479">Metal-binding</keyword>
<keyword id="KW-0862">Zinc</keyword>
<sequence>MIHYGNCNKICEKTVMNQRTIKTAIAVTGTGLHSGQPVDLEFHPQPIDTGIVFERSDITGSTPIPASAFLVQDTMMSSNLVFGGTRVGTVEHLLSAIAGLGVDNLLIRVSASEIPIMDGSAAPFVGLLLQAGFCEQDASKKFIRIVRTVRVKVDDKWAELRPYNGFELNFEIDFDHPAIDKNFQHAQLQFSTQNFIERLSSARTFGFLRDIEAMRQNNLALGGSMDNAIVIDESNILNEEGLRFNDEFVRHKILDALGDLYLIGYPILGRFNAYKSGHALNNLLVREILSDHNNFEIVTFDDNVTCPIEYLPLNGITVEG</sequence>
<feature type="chain" id="PRO_0000253688" description="UDP-3-O-acyl-N-acetylglucosamine deacetylase">
    <location>
        <begin position="1"/>
        <end position="320"/>
    </location>
</feature>
<feature type="active site" description="Proton donor" evidence="1">
    <location>
        <position position="278"/>
    </location>
</feature>
<feature type="binding site" evidence="1">
    <location>
        <position position="92"/>
    </location>
    <ligand>
        <name>Zn(2+)</name>
        <dbReference type="ChEBI" id="CHEBI:29105"/>
    </ligand>
</feature>
<feature type="binding site" evidence="1">
    <location>
        <position position="251"/>
    </location>
    <ligand>
        <name>Zn(2+)</name>
        <dbReference type="ChEBI" id="CHEBI:29105"/>
    </ligand>
</feature>
<feature type="binding site" evidence="1">
    <location>
        <position position="255"/>
    </location>
    <ligand>
        <name>Zn(2+)</name>
        <dbReference type="ChEBI" id="CHEBI:29105"/>
    </ligand>
</feature>
<dbReference type="EC" id="3.5.1.108" evidence="1"/>
<dbReference type="EMBL" id="CP000323">
    <property type="protein sequence ID" value="ABE75803.1"/>
    <property type="molecule type" value="Genomic_DNA"/>
</dbReference>
<dbReference type="SMR" id="Q1Q950"/>
<dbReference type="STRING" id="335284.Pcryo_2026"/>
<dbReference type="KEGG" id="pcr:Pcryo_2026"/>
<dbReference type="eggNOG" id="COG0774">
    <property type="taxonomic scope" value="Bacteria"/>
</dbReference>
<dbReference type="HOGENOM" id="CLU_046528_1_0_6"/>
<dbReference type="UniPathway" id="UPA00359">
    <property type="reaction ID" value="UER00478"/>
</dbReference>
<dbReference type="Proteomes" id="UP000002425">
    <property type="component" value="Chromosome"/>
</dbReference>
<dbReference type="GO" id="GO:0016020">
    <property type="term" value="C:membrane"/>
    <property type="evidence" value="ECO:0007669"/>
    <property type="project" value="GOC"/>
</dbReference>
<dbReference type="GO" id="GO:0046872">
    <property type="term" value="F:metal ion binding"/>
    <property type="evidence" value="ECO:0007669"/>
    <property type="project" value="UniProtKB-KW"/>
</dbReference>
<dbReference type="GO" id="GO:0103117">
    <property type="term" value="F:UDP-3-O-acyl-N-acetylglucosamine deacetylase activity"/>
    <property type="evidence" value="ECO:0007669"/>
    <property type="project" value="UniProtKB-UniRule"/>
</dbReference>
<dbReference type="GO" id="GO:0009245">
    <property type="term" value="P:lipid A biosynthetic process"/>
    <property type="evidence" value="ECO:0007669"/>
    <property type="project" value="UniProtKB-UniRule"/>
</dbReference>
<dbReference type="Gene3D" id="3.30.230.20">
    <property type="entry name" value="lpxc deacetylase, domain 1"/>
    <property type="match status" value="1"/>
</dbReference>
<dbReference type="Gene3D" id="3.30.1700.10">
    <property type="entry name" value="lpxc deacetylase, domain 2"/>
    <property type="match status" value="1"/>
</dbReference>
<dbReference type="HAMAP" id="MF_00388">
    <property type="entry name" value="LpxC"/>
    <property type="match status" value="1"/>
</dbReference>
<dbReference type="InterPro" id="IPR020568">
    <property type="entry name" value="Ribosomal_Su5_D2-typ_SF"/>
</dbReference>
<dbReference type="InterPro" id="IPR004463">
    <property type="entry name" value="UDP-acyl_GlcNac_deAcase"/>
</dbReference>
<dbReference type="InterPro" id="IPR011334">
    <property type="entry name" value="UDP-acyl_GlcNac_deAcase_C"/>
</dbReference>
<dbReference type="InterPro" id="IPR015870">
    <property type="entry name" value="UDP-acyl_N-AcGlcN_deAcase_N"/>
</dbReference>
<dbReference type="NCBIfam" id="TIGR00325">
    <property type="entry name" value="lpxC"/>
    <property type="match status" value="1"/>
</dbReference>
<dbReference type="PANTHER" id="PTHR33694">
    <property type="entry name" value="UDP-3-O-ACYL-N-ACETYLGLUCOSAMINE DEACETYLASE 1, MITOCHONDRIAL-RELATED"/>
    <property type="match status" value="1"/>
</dbReference>
<dbReference type="PANTHER" id="PTHR33694:SF1">
    <property type="entry name" value="UDP-3-O-ACYL-N-ACETYLGLUCOSAMINE DEACETYLASE 1, MITOCHONDRIAL-RELATED"/>
    <property type="match status" value="1"/>
</dbReference>
<dbReference type="Pfam" id="PF03331">
    <property type="entry name" value="LpxC"/>
    <property type="match status" value="1"/>
</dbReference>
<dbReference type="SUPFAM" id="SSF54211">
    <property type="entry name" value="Ribosomal protein S5 domain 2-like"/>
    <property type="match status" value="2"/>
</dbReference>
<reference key="1">
    <citation type="submission" date="2006-03" db="EMBL/GenBank/DDBJ databases">
        <title>Complete sequence of chromosome of Psychrobacter cryohalolentis K5.</title>
        <authorList>
            <consortium name="US DOE Joint Genome Institute"/>
            <person name="Copeland A."/>
            <person name="Lucas S."/>
            <person name="Lapidus A."/>
            <person name="Barry K."/>
            <person name="Detter J.C."/>
            <person name="Glavina T."/>
            <person name="Hammon N."/>
            <person name="Israni S."/>
            <person name="Dalin E."/>
            <person name="Tice H."/>
            <person name="Pitluck S."/>
            <person name="Brettin T."/>
            <person name="Bruce D."/>
            <person name="Han C."/>
            <person name="Tapia R."/>
            <person name="Sims D.R."/>
            <person name="Gilna P."/>
            <person name="Schmutz J."/>
            <person name="Larimer F."/>
            <person name="Land M."/>
            <person name="Hauser L."/>
            <person name="Kyrpides N."/>
            <person name="Kim E."/>
            <person name="Richardson P."/>
        </authorList>
    </citation>
    <scope>NUCLEOTIDE SEQUENCE [LARGE SCALE GENOMIC DNA]</scope>
    <source>
        <strain>ATCC BAA-1226 / DSM 17306 / VKM B-2378 / K5</strain>
    </source>
</reference>
<evidence type="ECO:0000255" key="1">
    <source>
        <dbReference type="HAMAP-Rule" id="MF_00388"/>
    </source>
</evidence>
<comment type="function">
    <text evidence="1">Catalyzes the hydrolysis of UDP-3-O-myristoyl-N-acetylglucosamine to form UDP-3-O-myristoylglucosamine and acetate, the committed step in lipid A biosynthesis.</text>
</comment>
<comment type="catalytic activity">
    <reaction evidence="1">
        <text>a UDP-3-O-[(3R)-3-hydroxyacyl]-N-acetyl-alpha-D-glucosamine + H2O = a UDP-3-O-[(3R)-3-hydroxyacyl]-alpha-D-glucosamine + acetate</text>
        <dbReference type="Rhea" id="RHEA:67816"/>
        <dbReference type="ChEBI" id="CHEBI:15377"/>
        <dbReference type="ChEBI" id="CHEBI:30089"/>
        <dbReference type="ChEBI" id="CHEBI:137740"/>
        <dbReference type="ChEBI" id="CHEBI:173225"/>
        <dbReference type="EC" id="3.5.1.108"/>
    </reaction>
</comment>
<comment type="cofactor">
    <cofactor evidence="1">
        <name>Zn(2+)</name>
        <dbReference type="ChEBI" id="CHEBI:29105"/>
    </cofactor>
</comment>
<comment type="pathway">
    <text evidence="1">Glycolipid biosynthesis; lipid IV(A) biosynthesis; lipid IV(A) from (3R)-3-hydroxytetradecanoyl-[acyl-carrier-protein] and UDP-N-acetyl-alpha-D-glucosamine: step 2/6.</text>
</comment>
<comment type="similarity">
    <text evidence="1">Belongs to the LpxC family.</text>
</comment>
<proteinExistence type="inferred from homology"/>
<accession>Q1Q950</accession>
<gene>
    <name evidence="1" type="primary">lpxC</name>
    <name type="ordered locus">Pcryo_2026</name>
</gene>
<protein>
    <recommendedName>
        <fullName evidence="1">UDP-3-O-acyl-N-acetylglucosamine deacetylase</fullName>
        <shortName evidence="1">UDP-3-O-acyl-GlcNAc deacetylase</shortName>
        <ecNumber evidence="1">3.5.1.108</ecNumber>
    </recommendedName>
    <alternativeName>
        <fullName evidence="1">UDP-3-O-[R-3-hydroxymyristoyl]-N-acetylglucosamine deacetylase</fullName>
    </alternativeName>
</protein>
<organism>
    <name type="scientific">Psychrobacter cryohalolentis (strain ATCC BAA-1226 / DSM 17306 / VKM B-2378 / K5)</name>
    <dbReference type="NCBI Taxonomy" id="335284"/>
    <lineage>
        <taxon>Bacteria</taxon>
        <taxon>Pseudomonadati</taxon>
        <taxon>Pseudomonadota</taxon>
        <taxon>Gammaproteobacteria</taxon>
        <taxon>Moraxellales</taxon>
        <taxon>Moraxellaceae</taxon>
        <taxon>Psychrobacter</taxon>
    </lineage>
</organism>
<name>LPXC_PSYCK</name>